<dbReference type="EC" id="6.3.2.36" evidence="1"/>
<dbReference type="EMBL" id="AE008384">
    <property type="protein sequence ID" value="AAM31977.1"/>
    <property type="molecule type" value="Genomic_DNA"/>
</dbReference>
<dbReference type="RefSeq" id="WP_011034208.1">
    <property type="nucleotide sequence ID" value="NC_003901.1"/>
</dbReference>
<dbReference type="SMR" id="Q8PUQ1"/>
<dbReference type="KEGG" id="mma:MM_2281"/>
<dbReference type="PATRIC" id="fig|192952.21.peg.2615"/>
<dbReference type="eggNOG" id="arCOG04262">
    <property type="taxonomic scope" value="Archaea"/>
</dbReference>
<dbReference type="HOGENOM" id="CLU_078701_0_0_2"/>
<dbReference type="BRENDA" id="6.3.2.44">
    <property type="organism ID" value="3270"/>
</dbReference>
<dbReference type="UniPathway" id="UPA00241"/>
<dbReference type="Proteomes" id="UP000000595">
    <property type="component" value="Chromosome"/>
</dbReference>
<dbReference type="GO" id="GO:0016881">
    <property type="term" value="F:acid-amino acid ligase activity"/>
    <property type="evidence" value="ECO:0007669"/>
    <property type="project" value="UniProtKB-UniRule"/>
</dbReference>
<dbReference type="GO" id="GO:0005524">
    <property type="term" value="F:ATP binding"/>
    <property type="evidence" value="ECO:0007669"/>
    <property type="project" value="UniProtKB-KW"/>
</dbReference>
<dbReference type="GO" id="GO:0015937">
    <property type="term" value="P:coenzyme A biosynthetic process"/>
    <property type="evidence" value="ECO:0007669"/>
    <property type="project" value="UniProtKB-UniRule"/>
</dbReference>
<dbReference type="Gene3D" id="3.40.50.12640">
    <property type="entry name" value="Phosphopantoate/pantothenate synthetase"/>
    <property type="match status" value="1"/>
</dbReference>
<dbReference type="HAMAP" id="MF_02224">
    <property type="entry name" value="PPS"/>
    <property type="match status" value="1"/>
</dbReference>
<dbReference type="InterPro" id="IPR002855">
    <property type="entry name" value="PPS/PS"/>
</dbReference>
<dbReference type="InterPro" id="IPR038138">
    <property type="entry name" value="PPS/PS_sf"/>
</dbReference>
<dbReference type="NCBIfam" id="NF041123">
    <property type="entry name" value="phpantohe_syn_Arch"/>
    <property type="match status" value="1"/>
</dbReference>
<dbReference type="NCBIfam" id="NF010324">
    <property type="entry name" value="PRK13761.1"/>
    <property type="match status" value="1"/>
</dbReference>
<dbReference type="PANTHER" id="PTHR40695">
    <property type="entry name" value="4-PHOSPHOPANTOATE--BETA-ALANINE LIGASE"/>
    <property type="match status" value="1"/>
</dbReference>
<dbReference type="PANTHER" id="PTHR40695:SF1">
    <property type="entry name" value="4-PHOSPHOPANTOATE--BETA-ALANINE LIGASE"/>
    <property type="match status" value="1"/>
</dbReference>
<dbReference type="Pfam" id="PF02006">
    <property type="entry name" value="PPS_PS"/>
    <property type="match status" value="1"/>
</dbReference>
<dbReference type="PIRSF" id="PIRSF004853">
    <property type="entry name" value="UCP004853"/>
    <property type="match status" value="1"/>
</dbReference>
<comment type="function">
    <text evidence="1">Catalyzes the condensation of (R)-4-phosphopantoate and beta-alanine to 4'-phosphopantothenate in the CoA biosynthesis pathway.</text>
</comment>
<comment type="catalytic activity">
    <reaction evidence="1">
        <text>(R)-4-phosphopantoate + beta-alanine + ATP = (R)-4'-phosphopantothenate + AMP + diphosphate + H(+)</text>
        <dbReference type="Rhea" id="RHEA:27930"/>
        <dbReference type="ChEBI" id="CHEBI:10986"/>
        <dbReference type="ChEBI" id="CHEBI:15378"/>
        <dbReference type="ChEBI" id="CHEBI:30616"/>
        <dbReference type="ChEBI" id="CHEBI:33019"/>
        <dbReference type="ChEBI" id="CHEBI:57966"/>
        <dbReference type="ChEBI" id="CHEBI:61294"/>
        <dbReference type="ChEBI" id="CHEBI:456215"/>
        <dbReference type="EC" id="6.3.2.36"/>
    </reaction>
</comment>
<comment type="pathway">
    <text evidence="1">Cofactor biosynthesis; coenzyme A biosynthesis.</text>
</comment>
<comment type="subunit">
    <text evidence="1 2">Homodimer.</text>
</comment>
<comment type="miscellaneous">
    <text evidence="4">Was originally thought to have pantothenate synthetase (PS) activity. Purified recombinant protein shows no PS activity on its own, but the enzyme enables substantial synthesis of 4'-phosphopantothenate from beta-alanine, pantoate and ATP when coupled with E.coli pantothenate kinase. ADP, but not AMP, was detected as a coproduct of the coupled reaction.</text>
</comment>
<comment type="similarity">
    <text evidence="1 3">Belongs to the archaeal phosphopantothenate synthetase family.</text>
</comment>
<sequence>MTDIPHDHPRYESLLAREKVAAGVKMGITSIQGLIAQGRGESFDYLIGERSTESALYAERAAVAALLLAENPVISVNGNVAALAPDKVVTLADITGARIEVNLFHRTDTRVHLIIEQLKASGAAEVLGKNPDASLELSHDRRLVSSKGIYTADVVLVPLEDGDRCEKLVEMGKTVITIDLNPLSRTSKTATISIVDNLTRALGNMAKFAQEMKKERKEELVKLITTYDNKRTLSEAISEIQEHLKTMAAETGY</sequence>
<feature type="chain" id="PRO_0000401205" description="4-phosphopantoate--beta-alanine ligase">
    <location>
        <begin position="1"/>
        <end position="253"/>
    </location>
</feature>
<feature type="binding site" evidence="1">
    <location>
        <position position="17"/>
    </location>
    <ligand>
        <name>ATP</name>
        <dbReference type="ChEBI" id="CHEBI:30616"/>
    </ligand>
</feature>
<feature type="binding site" evidence="1">
    <location>
        <position position="39"/>
    </location>
    <ligand>
        <name>ATP</name>
        <dbReference type="ChEBI" id="CHEBI:30616"/>
    </ligand>
</feature>
<feature type="binding site" evidence="1">
    <location>
        <begin position="179"/>
        <end position="181"/>
    </location>
    <ligand>
        <name>ATP</name>
        <dbReference type="ChEBI" id="CHEBI:30616"/>
    </ligand>
</feature>
<feature type="binding site" evidence="1">
    <location>
        <begin position="185"/>
        <end position="186"/>
    </location>
    <ligand>
        <name>ATP</name>
        <dbReference type="ChEBI" id="CHEBI:30616"/>
    </ligand>
</feature>
<feature type="binding site" evidence="1">
    <location>
        <begin position="197"/>
        <end position="198"/>
    </location>
    <ligand>
        <name>ATP</name>
        <dbReference type="ChEBI" id="CHEBI:30616"/>
    </ligand>
</feature>
<name>PPS_METMA</name>
<reference key="1">
    <citation type="journal article" date="2002" name="J. Mol. Microbiol. Biotechnol.">
        <title>The genome of Methanosarcina mazei: evidence for lateral gene transfer between Bacteria and Archaea.</title>
        <authorList>
            <person name="Deppenmeier U."/>
            <person name="Johann A."/>
            <person name="Hartsch T."/>
            <person name="Merkl R."/>
            <person name="Schmitz R.A."/>
            <person name="Martinez-Arias R."/>
            <person name="Henne A."/>
            <person name="Wiezer A."/>
            <person name="Baeumer S."/>
            <person name="Jacobi C."/>
            <person name="Brueggemann H."/>
            <person name="Lienard T."/>
            <person name="Christmann A."/>
            <person name="Boemecke M."/>
            <person name="Steckel S."/>
            <person name="Bhattacharyya A."/>
            <person name="Lykidis A."/>
            <person name="Overbeek R."/>
            <person name="Klenk H.-P."/>
            <person name="Gunsalus R.P."/>
            <person name="Fritz H.-J."/>
            <person name="Gottschalk G."/>
        </authorList>
    </citation>
    <scope>NUCLEOTIDE SEQUENCE [LARGE SCALE GENOMIC DNA]</scope>
    <source>
        <strain>ATCC BAA-159 / DSM 3647 / Goe1 / Go1 / JCM 11833 / OCM 88</strain>
    </source>
</reference>
<reference key="2">
    <citation type="journal article" date="2008" name="FEBS J.">
        <title>A novel isoform of pantothenate synthetase in the Archaea.</title>
        <authorList>
            <person name="Ronconi S."/>
            <person name="Jonczyk R."/>
            <person name="Genschel U."/>
        </authorList>
    </citation>
    <scope>PRELIMINARY FUNCTION</scope>
    <scope>SUBUNIT</scope>
    <source>
        <strain>ATCC BAA-159 / DSM 3647 / Goe1 / Go1 / JCM 11833 / OCM 88</strain>
    </source>
</reference>
<proteinExistence type="evidence at protein level"/>
<keyword id="KW-0067">ATP-binding</keyword>
<keyword id="KW-0173">Coenzyme A biosynthesis</keyword>
<keyword id="KW-0436">Ligase</keyword>
<keyword id="KW-0547">Nucleotide-binding</keyword>
<protein>
    <recommendedName>
        <fullName evidence="1">4-phosphopantoate--beta-alanine ligase</fullName>
        <ecNumber evidence="1">6.3.2.36</ecNumber>
    </recommendedName>
    <alternativeName>
        <fullName evidence="1">Phosphopantothenate synthetase</fullName>
        <shortName evidence="1">PPS</shortName>
    </alternativeName>
</protein>
<accession>Q8PUQ1</accession>
<gene>
    <name type="ordered locus">MM_2281</name>
</gene>
<organism>
    <name type="scientific">Methanosarcina mazei (strain ATCC BAA-159 / DSM 3647 / Goe1 / Go1 / JCM 11833 / OCM 88)</name>
    <name type="common">Methanosarcina frisia</name>
    <dbReference type="NCBI Taxonomy" id="192952"/>
    <lineage>
        <taxon>Archaea</taxon>
        <taxon>Methanobacteriati</taxon>
        <taxon>Methanobacteriota</taxon>
        <taxon>Stenosarchaea group</taxon>
        <taxon>Methanomicrobia</taxon>
        <taxon>Methanosarcinales</taxon>
        <taxon>Methanosarcinaceae</taxon>
        <taxon>Methanosarcina</taxon>
    </lineage>
</organism>
<evidence type="ECO:0000255" key="1">
    <source>
        <dbReference type="HAMAP-Rule" id="MF_02224"/>
    </source>
</evidence>
<evidence type="ECO:0000269" key="2">
    <source>
    </source>
</evidence>
<evidence type="ECO:0000305" key="3"/>
<evidence type="ECO:0000305" key="4">
    <source>
    </source>
</evidence>